<keyword id="KW-0067">ATP-binding</keyword>
<keyword id="KW-0963">Cytoplasm</keyword>
<keyword id="KW-0324">Glycolysis</keyword>
<keyword id="KW-0418">Kinase</keyword>
<keyword id="KW-0460">Magnesium</keyword>
<keyword id="KW-0479">Metal-binding</keyword>
<keyword id="KW-0547">Nucleotide-binding</keyword>
<keyword id="KW-0808">Transferase</keyword>
<accession>B8GAA4</accession>
<feature type="chain" id="PRO_1000192367" description="ATP-dependent 6-phosphofructokinase">
    <location>
        <begin position="1"/>
        <end position="356"/>
    </location>
</feature>
<feature type="active site" description="Proton acceptor" evidence="1">
    <location>
        <position position="140"/>
    </location>
</feature>
<feature type="binding site" evidence="1">
    <location>
        <position position="15"/>
    </location>
    <ligand>
        <name>ATP</name>
        <dbReference type="ChEBI" id="CHEBI:30616"/>
    </ligand>
</feature>
<feature type="binding site" evidence="1">
    <location>
        <begin position="78"/>
        <end position="79"/>
    </location>
    <ligand>
        <name>ATP</name>
        <dbReference type="ChEBI" id="CHEBI:30616"/>
    </ligand>
</feature>
<feature type="binding site" evidence="1">
    <location>
        <begin position="115"/>
        <end position="118"/>
    </location>
    <ligand>
        <name>ATP</name>
        <dbReference type="ChEBI" id="CHEBI:30616"/>
    </ligand>
</feature>
<feature type="binding site" evidence="1">
    <location>
        <position position="116"/>
    </location>
    <ligand>
        <name>Mg(2+)</name>
        <dbReference type="ChEBI" id="CHEBI:18420"/>
        <note>catalytic</note>
    </ligand>
</feature>
<feature type="binding site" description="in other chain" evidence="1">
    <location>
        <begin position="138"/>
        <end position="140"/>
    </location>
    <ligand>
        <name>substrate</name>
        <note>ligand shared between dimeric partners</note>
    </ligand>
</feature>
<feature type="binding site" evidence="1">
    <location>
        <position position="175"/>
    </location>
    <ligand>
        <name>substrate</name>
        <note>ligand shared between dimeric partners</note>
    </ligand>
</feature>
<feature type="binding site" description="in other chain" evidence="1">
    <location>
        <begin position="182"/>
        <end position="184"/>
    </location>
    <ligand>
        <name>substrate</name>
        <note>ligand shared between dimeric partners</note>
    </ligand>
</feature>
<feature type="binding site" description="in other chain" evidence="1">
    <location>
        <position position="235"/>
    </location>
    <ligand>
        <name>substrate</name>
        <note>ligand shared between dimeric partners</note>
    </ligand>
</feature>
<feature type="binding site" evidence="1">
    <location>
        <position position="272"/>
    </location>
    <ligand>
        <name>substrate</name>
        <note>ligand shared between dimeric partners</note>
    </ligand>
</feature>
<feature type="binding site" description="in other chain" evidence="1">
    <location>
        <begin position="278"/>
        <end position="281"/>
    </location>
    <ligand>
        <name>substrate</name>
        <note>ligand shared between dimeric partners</note>
    </ligand>
</feature>
<feature type="site" description="Important for substrate specificity; cannot use PPi as phosphoryl donor" evidence="1">
    <location>
        <position position="117"/>
    </location>
</feature>
<organism>
    <name type="scientific">Chloroflexus aggregans (strain MD-66 / DSM 9485)</name>
    <dbReference type="NCBI Taxonomy" id="326427"/>
    <lineage>
        <taxon>Bacteria</taxon>
        <taxon>Bacillati</taxon>
        <taxon>Chloroflexota</taxon>
        <taxon>Chloroflexia</taxon>
        <taxon>Chloroflexales</taxon>
        <taxon>Chloroflexineae</taxon>
        <taxon>Chloroflexaceae</taxon>
        <taxon>Chloroflexus</taxon>
    </lineage>
</organism>
<protein>
    <recommendedName>
        <fullName evidence="1">ATP-dependent 6-phosphofructokinase</fullName>
        <shortName evidence="1">ATP-PFK</shortName>
        <shortName evidence="1">Phosphofructokinase</shortName>
        <ecNumber evidence="1">2.7.1.11</ecNumber>
    </recommendedName>
    <alternativeName>
        <fullName evidence="1">Phosphohexokinase</fullName>
    </alternativeName>
</protein>
<dbReference type="EC" id="2.7.1.11" evidence="1"/>
<dbReference type="EMBL" id="CP001337">
    <property type="protein sequence ID" value="ACL26479.1"/>
    <property type="molecule type" value="Genomic_DNA"/>
</dbReference>
<dbReference type="RefSeq" id="WP_015942324.1">
    <property type="nucleotide sequence ID" value="NC_011831.1"/>
</dbReference>
<dbReference type="SMR" id="B8GAA4"/>
<dbReference type="STRING" id="326427.Cagg_3643"/>
<dbReference type="KEGG" id="cag:Cagg_3643"/>
<dbReference type="eggNOG" id="COG0205">
    <property type="taxonomic scope" value="Bacteria"/>
</dbReference>
<dbReference type="HOGENOM" id="CLU_020655_0_0_0"/>
<dbReference type="OrthoDB" id="9802503at2"/>
<dbReference type="UniPathway" id="UPA00109">
    <property type="reaction ID" value="UER00182"/>
</dbReference>
<dbReference type="Proteomes" id="UP000002508">
    <property type="component" value="Chromosome"/>
</dbReference>
<dbReference type="GO" id="GO:0005945">
    <property type="term" value="C:6-phosphofructokinase complex"/>
    <property type="evidence" value="ECO:0007669"/>
    <property type="project" value="TreeGrafter"/>
</dbReference>
<dbReference type="GO" id="GO:0003872">
    <property type="term" value="F:6-phosphofructokinase activity"/>
    <property type="evidence" value="ECO:0007669"/>
    <property type="project" value="UniProtKB-UniRule"/>
</dbReference>
<dbReference type="GO" id="GO:0016208">
    <property type="term" value="F:AMP binding"/>
    <property type="evidence" value="ECO:0007669"/>
    <property type="project" value="TreeGrafter"/>
</dbReference>
<dbReference type="GO" id="GO:0005524">
    <property type="term" value="F:ATP binding"/>
    <property type="evidence" value="ECO:0007669"/>
    <property type="project" value="UniProtKB-KW"/>
</dbReference>
<dbReference type="GO" id="GO:0047334">
    <property type="term" value="F:diphosphate-fructose-6-phosphate 1-phosphotransferase activity"/>
    <property type="evidence" value="ECO:0007669"/>
    <property type="project" value="InterPro"/>
</dbReference>
<dbReference type="GO" id="GO:0070095">
    <property type="term" value="F:fructose-6-phosphate binding"/>
    <property type="evidence" value="ECO:0007669"/>
    <property type="project" value="TreeGrafter"/>
</dbReference>
<dbReference type="GO" id="GO:0042802">
    <property type="term" value="F:identical protein binding"/>
    <property type="evidence" value="ECO:0007669"/>
    <property type="project" value="TreeGrafter"/>
</dbReference>
<dbReference type="GO" id="GO:0046872">
    <property type="term" value="F:metal ion binding"/>
    <property type="evidence" value="ECO:0007669"/>
    <property type="project" value="UniProtKB-KW"/>
</dbReference>
<dbReference type="GO" id="GO:0048029">
    <property type="term" value="F:monosaccharide binding"/>
    <property type="evidence" value="ECO:0007669"/>
    <property type="project" value="TreeGrafter"/>
</dbReference>
<dbReference type="GO" id="GO:0061621">
    <property type="term" value="P:canonical glycolysis"/>
    <property type="evidence" value="ECO:0007669"/>
    <property type="project" value="TreeGrafter"/>
</dbReference>
<dbReference type="GO" id="GO:0030388">
    <property type="term" value="P:fructose 1,6-bisphosphate metabolic process"/>
    <property type="evidence" value="ECO:0007669"/>
    <property type="project" value="TreeGrafter"/>
</dbReference>
<dbReference type="GO" id="GO:0006002">
    <property type="term" value="P:fructose 6-phosphate metabolic process"/>
    <property type="evidence" value="ECO:0007669"/>
    <property type="project" value="InterPro"/>
</dbReference>
<dbReference type="FunFam" id="3.40.50.460:FF:000002">
    <property type="entry name" value="ATP-dependent 6-phosphofructokinase"/>
    <property type="match status" value="1"/>
</dbReference>
<dbReference type="Gene3D" id="3.40.50.450">
    <property type="match status" value="1"/>
</dbReference>
<dbReference type="Gene3D" id="3.40.50.460">
    <property type="entry name" value="Phosphofructokinase domain"/>
    <property type="match status" value="1"/>
</dbReference>
<dbReference type="HAMAP" id="MF_01976">
    <property type="entry name" value="Phosphofructokinase_III"/>
    <property type="match status" value="1"/>
</dbReference>
<dbReference type="InterPro" id="IPR022953">
    <property type="entry name" value="ATP_PFK"/>
</dbReference>
<dbReference type="InterPro" id="IPR012003">
    <property type="entry name" value="ATP_PFK_prok-type"/>
</dbReference>
<dbReference type="InterPro" id="IPR015912">
    <property type="entry name" value="Phosphofructokinase_CS"/>
</dbReference>
<dbReference type="InterPro" id="IPR000023">
    <property type="entry name" value="Phosphofructokinase_dom"/>
</dbReference>
<dbReference type="InterPro" id="IPR012829">
    <property type="entry name" value="Phosphofructokinase_III"/>
</dbReference>
<dbReference type="InterPro" id="IPR035966">
    <property type="entry name" value="PKF_sf"/>
</dbReference>
<dbReference type="NCBIfam" id="TIGR02483">
    <property type="entry name" value="PFK_mixed"/>
    <property type="match status" value="1"/>
</dbReference>
<dbReference type="NCBIfam" id="NF002872">
    <property type="entry name" value="PRK03202.1"/>
    <property type="match status" value="1"/>
</dbReference>
<dbReference type="PANTHER" id="PTHR13697:SF52">
    <property type="entry name" value="ATP-DEPENDENT 6-PHOSPHOFRUCTOKINASE 3"/>
    <property type="match status" value="1"/>
</dbReference>
<dbReference type="PANTHER" id="PTHR13697">
    <property type="entry name" value="PHOSPHOFRUCTOKINASE"/>
    <property type="match status" value="1"/>
</dbReference>
<dbReference type="Pfam" id="PF00365">
    <property type="entry name" value="PFK"/>
    <property type="match status" value="1"/>
</dbReference>
<dbReference type="PIRSF" id="PIRSF000532">
    <property type="entry name" value="ATP_PFK_prok"/>
    <property type="match status" value="1"/>
</dbReference>
<dbReference type="PRINTS" id="PR00476">
    <property type="entry name" value="PHFRCTKINASE"/>
</dbReference>
<dbReference type="SUPFAM" id="SSF53784">
    <property type="entry name" value="Phosphofructokinase"/>
    <property type="match status" value="1"/>
</dbReference>
<dbReference type="PROSITE" id="PS00433">
    <property type="entry name" value="PHOSPHOFRUCTOKINASE"/>
    <property type="match status" value="1"/>
</dbReference>
<sequence length="356" mass="37734">MASKKQRIGVLTSGGDAPGLNAVIRAVVKSASSLGWEVIGIHDGFEGLLGTKSYRVLTNADVQGLLPRGGTILRTTNKGHFGPRRSDELSEADPYVRAVKAIEEMGLRALITIGGEGTQRIALELHKLGAPVIGVPKTIDNDLAGTDRTFGFDTALQVATDAIDRLHTTAASHNRVMVLEVMGRHTGWIALHAGLAGGADVILIPEIPFTIERVAEKVHARDAQGSAFSIIVVAEGARPRGGSEMYIAEGRLGGIGHWVGEQLERLTGKDVRVVVLGHLQRGGSPSPYDRLLSTRYGAAAVQAAARGIYGEMVALRGQDIVTVPLAEACGYLNRVRPHSDLVLCARSLGIVFGDEL</sequence>
<gene>
    <name evidence="1" type="primary">pfkA</name>
    <name type="ordered locus">Cagg_3643</name>
</gene>
<proteinExistence type="inferred from homology"/>
<comment type="function">
    <text evidence="1">Catalyzes the phosphorylation of D-fructose 6-phosphate to fructose 1,6-bisphosphate by ATP, the first committing step of glycolysis.</text>
</comment>
<comment type="catalytic activity">
    <reaction evidence="1">
        <text>beta-D-fructose 6-phosphate + ATP = beta-D-fructose 1,6-bisphosphate + ADP + H(+)</text>
        <dbReference type="Rhea" id="RHEA:16109"/>
        <dbReference type="ChEBI" id="CHEBI:15378"/>
        <dbReference type="ChEBI" id="CHEBI:30616"/>
        <dbReference type="ChEBI" id="CHEBI:32966"/>
        <dbReference type="ChEBI" id="CHEBI:57634"/>
        <dbReference type="ChEBI" id="CHEBI:456216"/>
        <dbReference type="EC" id="2.7.1.11"/>
    </reaction>
</comment>
<comment type="cofactor">
    <cofactor evidence="1">
        <name>Mg(2+)</name>
        <dbReference type="ChEBI" id="CHEBI:18420"/>
    </cofactor>
</comment>
<comment type="pathway">
    <text evidence="1">Carbohydrate degradation; glycolysis; D-glyceraldehyde 3-phosphate and glycerone phosphate from D-glucose: step 3/4.</text>
</comment>
<comment type="subunit">
    <text evidence="1">Homodimer or homotetramer.</text>
</comment>
<comment type="subcellular location">
    <subcellularLocation>
        <location evidence="1">Cytoplasm</location>
    </subcellularLocation>
</comment>
<comment type="similarity">
    <text evidence="1">Belongs to the phosphofructokinase type A (PFKA) family. Mixed-substrate PFK group III subfamily.</text>
</comment>
<reference key="1">
    <citation type="submission" date="2008-12" db="EMBL/GenBank/DDBJ databases">
        <title>Complete sequence of Chloroflexus aggregans DSM 9485.</title>
        <authorList>
            <consortium name="US DOE Joint Genome Institute"/>
            <person name="Lucas S."/>
            <person name="Copeland A."/>
            <person name="Lapidus A."/>
            <person name="Glavina del Rio T."/>
            <person name="Dalin E."/>
            <person name="Tice H."/>
            <person name="Pitluck S."/>
            <person name="Foster B."/>
            <person name="Larimer F."/>
            <person name="Land M."/>
            <person name="Hauser L."/>
            <person name="Kyrpides N."/>
            <person name="Mikhailova N."/>
            <person name="Bryant D.A."/>
            <person name="Richardson P."/>
        </authorList>
    </citation>
    <scope>NUCLEOTIDE SEQUENCE [LARGE SCALE GENOMIC DNA]</scope>
    <source>
        <strain>MD-66 / DSM 9485</strain>
    </source>
</reference>
<name>PFKA_CHLAD</name>
<evidence type="ECO:0000255" key="1">
    <source>
        <dbReference type="HAMAP-Rule" id="MF_01976"/>
    </source>
</evidence>